<sequence>MKRLNLLCCCVASLLLLGTAEEVEDASEPTKRDRSHLENTLKLNEDKPADDFSGVLQRLRKIYHASIKPLEQSYRYNELRQHEITDGEITSKPMVLFLGPWSVGKSSMINYLLGLDDTPYQLYTGAEPTTSEFTVIMHGPKLKTIEGIVMAADSARSFSPLEKFGQNFLEKLIGIEVPHKLLERVTFVDTPGIIENRKQQERGYPFNDVCQWFIDRADLIFVVFDPTKLDVGLELEMLFRQLKGRESQIRIILNKADSLATQELMRVYGALFWSLAPLINVTEPPRVYVSSFWPHEYHPDTHKDLFLKEEISLLEDLNQVIENRMENKIAFIRQHAIRVRIHALLVDRYLQTYKDKMTFFSDGELVFRDIVEDPDKFFIFKSILAKTNVSKFDLPNREAYKDFFGINPITSFKLLSQQCSYMGGCYLEKIEKAITRELPDLLGSIGLGKKPNVLSCDVTGCGETPKNRYKKP</sequence>
<evidence type="ECO:0000250" key="1">
    <source>
        <dbReference type="UniProtKB" id="P13666"/>
    </source>
</evidence>
<evidence type="ECO:0000255" key="2"/>
<evidence type="ECO:0000255" key="3">
    <source>
        <dbReference type="PROSITE-ProRule" id="PRU00498"/>
    </source>
</evidence>
<evidence type="ECO:0000255" key="4">
    <source>
        <dbReference type="PROSITE-ProRule" id="PRU01055"/>
    </source>
</evidence>
<evidence type="ECO:0000303" key="5">
    <source ref="1"/>
</evidence>
<evidence type="ECO:0000305" key="6"/>
<evidence type="ECO:0000312" key="7">
    <source>
        <dbReference type="Proteomes" id="UP000000539"/>
    </source>
</evidence>
<name>SRCA_CHICK</name>
<proteinExistence type="evidence at transcript level"/>
<feature type="signal peptide" evidence="2">
    <location>
        <begin position="1"/>
        <end position="20"/>
    </location>
</feature>
<feature type="chain" id="PRO_0000045428" description="Sarcalumenin">
    <location>
        <begin position="21"/>
        <end position="472"/>
    </location>
</feature>
<feature type="domain" description="Dynamin-type G" evidence="4">
    <location>
        <begin position="89"/>
        <end position="330"/>
    </location>
</feature>
<feature type="region of interest" description="G1 motif" evidence="4">
    <location>
        <begin position="99"/>
        <end position="106"/>
    </location>
</feature>
<feature type="region of interest" description="G2 motif" evidence="4">
    <location>
        <begin position="127"/>
        <end position="128"/>
    </location>
</feature>
<feature type="region of interest" description="G3 motif" evidence="4">
    <location>
        <begin position="189"/>
        <end position="192"/>
    </location>
</feature>
<feature type="region of interest" description="G4 motif" evidence="4">
    <location>
        <begin position="254"/>
        <end position="257"/>
    </location>
</feature>
<feature type="region of interest" description="G5 motif" evidence="4">
    <location>
        <position position="278"/>
    </location>
</feature>
<feature type="glycosylation site" description="N-linked (GlcNAc...) asparagine" evidence="2">
    <location>
        <position position="280"/>
    </location>
</feature>
<feature type="glycosylation site" description="N-linked (GlcNAc...) asparagine" evidence="2">
    <location>
        <position position="388"/>
    </location>
</feature>
<feature type="splice variant" id="VSP_060760" description="In isoform 2." evidence="6">
    <original>A</original>
    <variation>ADEDVGRAAQRPSSEALPHVEEMAANGSPEEEEEDGGAANTSVLRTAEGGGEREEELKGGLSEAAGQGQEGPDGASGKDAMLGGPGAEGEAAPEPGTQHGGQEEEEANTKEVASEEKEMEEPRVSAPEGGEEEDEQSSEEDDEQEESEEDEGKAESEEEGKSAEEGESEEDGASPEVLEDGAEGTDMKETPGENSHGKAAASSEGEQRDGPASCHHPPCGDVEPSPGSSSQAAAEEPSTAVEEAAATEDPPTAVKIPPAALENPPTAEDPPAAVGDPPADQAPLAEMENPASPSARHAAAEPRRSQI</variation>
    <location>
        <position position="20"/>
    </location>
</feature>
<feature type="splice variant" id="VSP_060761" description="In isoform 2." evidence="6">
    <original>I</original>
    <variation>ITAYPGRTLGSSA</variation>
    <location>
        <position position="84"/>
    </location>
</feature>
<feature type="sequence conflict" description="In Ref. 1; CAA79817." ref="1">
    <original>E</original>
    <variation>G</variation>
    <location>
        <position position="127"/>
    </location>
</feature>
<feature type="sequence conflict" description="In Ref. 1; CAA79817." ref="1">
    <original>E</original>
    <variation>K</variation>
    <location>
        <position position="162"/>
    </location>
</feature>
<feature type="sequence conflict" description="In Ref. 1; CAA79817." ref="1">
    <original>V</original>
    <variation>L</variation>
    <location>
        <position position="177"/>
    </location>
</feature>
<feature type="sequence conflict" description="In Ref. 1; CAA79817." ref="1">
    <location>
        <position position="270"/>
    </location>
</feature>
<feature type="sequence conflict" description="In Ref. 1; CAA79817." ref="1">
    <original>N</original>
    <variation>Q</variation>
    <location>
        <position position="396"/>
    </location>
</feature>
<feature type="glycosylation site" description="N-linked (GlcNAc...) asparagine" evidence="3">
    <location sequence="Q90577-2">
        <position position="59"/>
    </location>
</feature>
<comment type="subcellular location">
    <subcellularLocation>
        <location evidence="1">Sarcoplasmic reticulum lumen</location>
    </subcellularLocation>
    <subcellularLocation>
        <location evidence="1">Sarcoplasmic reticulum membrane</location>
        <topology evidence="1">Peripheral membrane protein</topology>
    </subcellularLocation>
    <text evidence="1">May associate with the sarcoplasmic reticulum membrane, via a calcium-dependent mechanism.</text>
</comment>
<comment type="alternative products">
    <event type="alternative splicing"/>
    <isoform>
        <id>Q90577-1</id>
        <name>1</name>
        <name evidence="5">53 kDa</name>
        <sequence type="displayed"/>
    </isoform>
    <isoform>
        <id>Q90577-2</id>
        <name>2</name>
        <sequence type="described" ref="VSP_060760 VSP_060761"/>
    </isoform>
</comment>
<comment type="PTM">
    <text evidence="1">N-glycosylated.</text>
</comment>
<comment type="similarity">
    <text evidence="4">Belongs to the TRAFAC class dynamin-like GTPase superfamily. Dynamin/Fzo/YdjA family.</text>
</comment>
<reference key="1">
    <citation type="submission" date="1993-01" db="EMBL/GenBank/DDBJ databases">
        <title>Molecular cloning of the 53kDa glycoprotein from chicken sarcoplasmic reticulum.</title>
        <authorList>
            <person name="Boyd K.L."/>
            <person name="Kutchai H."/>
            <person name="Takeyasu K."/>
        </authorList>
    </citation>
    <scope>NUCLEOTIDE SEQUENCE [MRNA]</scope>
    <source>
        <tissue>Anterior latissimus dorsi muscle</tissue>
    </source>
</reference>
<reference evidence="7" key="2">
    <citation type="journal article" date="2004" name="Nature">
        <title>Sequence and comparative analysis of the chicken genome provide unique perspectives on vertebrate evolution.</title>
        <authorList>
            <person name="Hillier L.W."/>
            <person name="Miller W."/>
            <person name="Birney E."/>
            <person name="Warren W."/>
            <person name="Hardison R.C."/>
            <person name="Ponting C.P."/>
            <person name="Bork P."/>
            <person name="Burt D.W."/>
            <person name="Groenen M.A.M."/>
            <person name="Delany M.E."/>
            <person name="Dodgson J.B."/>
            <person name="Chinwalla A.T."/>
            <person name="Cliften P.F."/>
            <person name="Clifton S.W."/>
            <person name="Delehaunty K.D."/>
            <person name="Fronick C."/>
            <person name="Fulton R.S."/>
            <person name="Graves T.A."/>
            <person name="Kremitzki C."/>
            <person name="Layman D."/>
            <person name="Magrini V."/>
            <person name="McPherson J.D."/>
            <person name="Miner T.L."/>
            <person name="Minx P."/>
            <person name="Nash W.E."/>
            <person name="Nhan M.N."/>
            <person name="Nelson J.O."/>
            <person name="Oddy L.G."/>
            <person name="Pohl C.S."/>
            <person name="Randall-Maher J."/>
            <person name="Smith S.M."/>
            <person name="Wallis J.W."/>
            <person name="Yang S.-P."/>
            <person name="Romanov M.N."/>
            <person name="Rondelli C.M."/>
            <person name="Paton B."/>
            <person name="Smith J."/>
            <person name="Morrice D."/>
            <person name="Daniels L."/>
            <person name="Tempest H.G."/>
            <person name="Robertson L."/>
            <person name="Masabanda J.S."/>
            <person name="Griffin D.K."/>
            <person name="Vignal A."/>
            <person name="Fillon V."/>
            <person name="Jacobbson L."/>
            <person name="Kerje S."/>
            <person name="Andersson L."/>
            <person name="Crooijmans R.P."/>
            <person name="Aerts J."/>
            <person name="van der Poel J.J."/>
            <person name="Ellegren H."/>
            <person name="Caldwell R.B."/>
            <person name="Hubbard S.J."/>
            <person name="Grafham D.V."/>
            <person name="Kierzek A.M."/>
            <person name="McLaren S.R."/>
            <person name="Overton I.M."/>
            <person name="Arakawa H."/>
            <person name="Beattie K.J."/>
            <person name="Bezzubov Y."/>
            <person name="Boardman P.E."/>
            <person name="Bonfield J.K."/>
            <person name="Croning M.D.R."/>
            <person name="Davies R.M."/>
            <person name="Francis M.D."/>
            <person name="Humphray S.J."/>
            <person name="Scott C.E."/>
            <person name="Taylor R.G."/>
            <person name="Tickle C."/>
            <person name="Brown W.R.A."/>
            <person name="Rogers J."/>
            <person name="Buerstedde J.-M."/>
            <person name="Wilson S.A."/>
            <person name="Stubbs L."/>
            <person name="Ovcharenko I."/>
            <person name="Gordon L."/>
            <person name="Lucas S."/>
            <person name="Miller M.M."/>
            <person name="Inoko H."/>
            <person name="Shiina T."/>
            <person name="Kaufman J."/>
            <person name="Salomonsen J."/>
            <person name="Skjoedt K."/>
            <person name="Wong G.K.-S."/>
            <person name="Wang J."/>
            <person name="Liu B."/>
            <person name="Wang J."/>
            <person name="Yu J."/>
            <person name="Yang H."/>
            <person name="Nefedov M."/>
            <person name="Koriabine M."/>
            <person name="Dejong P.J."/>
            <person name="Goodstadt L."/>
            <person name="Webber C."/>
            <person name="Dickens N.J."/>
            <person name="Letunic I."/>
            <person name="Suyama M."/>
            <person name="Torrents D."/>
            <person name="von Mering C."/>
            <person name="Zdobnov E.M."/>
            <person name="Makova K."/>
            <person name="Nekrutenko A."/>
            <person name="Elnitski L."/>
            <person name="Eswara P."/>
            <person name="King D.C."/>
            <person name="Yang S.-P."/>
            <person name="Tyekucheva S."/>
            <person name="Radakrishnan A."/>
            <person name="Harris R.S."/>
            <person name="Chiaromonte F."/>
            <person name="Taylor J."/>
            <person name="He J."/>
            <person name="Rijnkels M."/>
            <person name="Griffiths-Jones S."/>
            <person name="Ureta-Vidal A."/>
            <person name="Hoffman M.M."/>
            <person name="Severin J."/>
            <person name="Searle S.M.J."/>
            <person name="Law A.S."/>
            <person name="Speed D."/>
            <person name="Waddington D."/>
            <person name="Cheng Z."/>
            <person name="Tuzun E."/>
            <person name="Eichler E."/>
            <person name="Bao Z."/>
            <person name="Flicek P."/>
            <person name="Shteynberg D.D."/>
            <person name="Brent M.R."/>
            <person name="Bye J.M."/>
            <person name="Huckle E.J."/>
            <person name="Chatterji S."/>
            <person name="Dewey C."/>
            <person name="Pachter L."/>
            <person name="Kouranov A."/>
            <person name="Mourelatos Z."/>
            <person name="Hatzigeorgiou A.G."/>
            <person name="Paterson A.H."/>
            <person name="Ivarie R."/>
            <person name="Brandstrom M."/>
            <person name="Axelsson E."/>
            <person name="Backstrom N."/>
            <person name="Berlin S."/>
            <person name="Webster M.T."/>
            <person name="Pourquie O."/>
            <person name="Reymond A."/>
            <person name="Ucla C."/>
            <person name="Antonarakis S.E."/>
            <person name="Long M."/>
            <person name="Emerson J.J."/>
            <person name="Betran E."/>
            <person name="Dupanloup I."/>
            <person name="Kaessmann H."/>
            <person name="Hinrichs A.S."/>
            <person name="Bejerano G."/>
            <person name="Furey T.S."/>
            <person name="Harte R.A."/>
            <person name="Raney B."/>
            <person name="Siepel A."/>
            <person name="Kent W.J."/>
            <person name="Haussler D."/>
            <person name="Eyras E."/>
            <person name="Castelo R."/>
            <person name="Abril J.F."/>
            <person name="Castellano S."/>
            <person name="Camara F."/>
            <person name="Parra G."/>
            <person name="Guigo R."/>
            <person name="Bourque G."/>
            <person name="Tesler G."/>
            <person name="Pevzner P.A."/>
            <person name="Smit A."/>
            <person name="Fulton L.A."/>
            <person name="Mardis E.R."/>
            <person name="Wilson R.K."/>
        </authorList>
    </citation>
    <scope>NUCLEOTIDE SEQUENCE [LARGE SCALE GENOMIC DNA]</scope>
    <source>
        <strain evidence="7">Red jungle fowl</strain>
    </source>
</reference>
<accession>Q90577</accession>
<accession>A0A1D5P984</accession>
<accession>A0A1D5PLW0</accession>
<dbReference type="EMBL" id="Z21720">
    <property type="protein sequence ID" value="CAA79817.1"/>
    <property type="molecule type" value="mRNA"/>
</dbReference>
<dbReference type="EMBL" id="AADN05000376">
    <property type="status" value="NOT_ANNOTATED_CDS"/>
    <property type="molecule type" value="Genomic_DNA"/>
</dbReference>
<dbReference type="PIR" id="S45068">
    <property type="entry name" value="S45068"/>
</dbReference>
<dbReference type="RefSeq" id="NP_990660.2">
    <molecule id="Q90577-1"/>
    <property type="nucleotide sequence ID" value="NM_205329.2"/>
</dbReference>
<dbReference type="RefSeq" id="XP_046783251.1">
    <molecule id="Q90577-2"/>
    <property type="nucleotide sequence ID" value="XM_046927295.1"/>
</dbReference>
<dbReference type="SMR" id="Q90577"/>
<dbReference type="FunCoup" id="Q90577">
    <property type="interactions" value="3"/>
</dbReference>
<dbReference type="STRING" id="9031.ENSGALP00000053831"/>
<dbReference type="GlyCosmos" id="Q90577">
    <property type="glycosylation" value="3 sites, No reported glycans"/>
</dbReference>
<dbReference type="GlyGen" id="Q90577">
    <property type="glycosylation" value="2 sites"/>
</dbReference>
<dbReference type="PaxDb" id="9031-ENSGALP00000038763"/>
<dbReference type="GeneID" id="396269"/>
<dbReference type="KEGG" id="gga:396269"/>
<dbReference type="CTD" id="6345"/>
<dbReference type="VEuPathDB" id="HostDB:geneid_396269"/>
<dbReference type="eggNOG" id="KOG1954">
    <property type="taxonomic scope" value="Eukaryota"/>
</dbReference>
<dbReference type="InParanoid" id="Q90577"/>
<dbReference type="OrthoDB" id="422720at2759"/>
<dbReference type="PhylomeDB" id="Q90577"/>
<dbReference type="PRO" id="PR:Q90577"/>
<dbReference type="Proteomes" id="UP000000539">
    <property type="component" value="Chromosome 14"/>
</dbReference>
<dbReference type="Bgee" id="ENSGALG00000038884">
    <property type="expression patterns" value="Expressed in skeletal muscle tissue and 6 other cell types or tissues"/>
</dbReference>
<dbReference type="GO" id="GO:0005741">
    <property type="term" value="C:mitochondrial outer membrane"/>
    <property type="evidence" value="ECO:0000318"/>
    <property type="project" value="GO_Central"/>
</dbReference>
<dbReference type="GO" id="GO:0033018">
    <property type="term" value="C:sarcoplasmic reticulum lumen"/>
    <property type="evidence" value="ECO:0007669"/>
    <property type="project" value="UniProtKB-SubCell"/>
</dbReference>
<dbReference type="GO" id="GO:0033017">
    <property type="term" value="C:sarcoplasmic reticulum membrane"/>
    <property type="evidence" value="ECO:0007669"/>
    <property type="project" value="UniProtKB-SubCell"/>
</dbReference>
<dbReference type="GO" id="GO:0005525">
    <property type="term" value="F:GTP binding"/>
    <property type="evidence" value="ECO:0007669"/>
    <property type="project" value="InterPro"/>
</dbReference>
<dbReference type="GO" id="GO:0003924">
    <property type="term" value="F:GTPase activity"/>
    <property type="evidence" value="ECO:0000318"/>
    <property type="project" value="GO_Central"/>
</dbReference>
<dbReference type="GO" id="GO:0008053">
    <property type="term" value="P:mitochondrial fusion"/>
    <property type="evidence" value="ECO:0000318"/>
    <property type="project" value="GO_Central"/>
</dbReference>
<dbReference type="GO" id="GO:0051646">
    <property type="term" value="P:mitochondrion localization"/>
    <property type="evidence" value="ECO:0000318"/>
    <property type="project" value="GO_Central"/>
</dbReference>
<dbReference type="CDD" id="cd09913">
    <property type="entry name" value="EHD"/>
    <property type="match status" value="1"/>
</dbReference>
<dbReference type="FunFam" id="3.40.50.300:FF:000635">
    <property type="entry name" value="Sarcalumenin, putative"/>
    <property type="match status" value="1"/>
</dbReference>
<dbReference type="Gene3D" id="1.10.268.20">
    <property type="match status" value="1"/>
</dbReference>
<dbReference type="Gene3D" id="3.40.50.300">
    <property type="entry name" value="P-loop containing nucleotide triphosphate hydrolases"/>
    <property type="match status" value="1"/>
</dbReference>
<dbReference type="InterPro" id="IPR045063">
    <property type="entry name" value="Dynamin_N"/>
</dbReference>
<dbReference type="InterPro" id="IPR031692">
    <property type="entry name" value="EHD_N"/>
</dbReference>
<dbReference type="InterPro" id="IPR030381">
    <property type="entry name" value="G_DYNAMIN_dom"/>
</dbReference>
<dbReference type="InterPro" id="IPR027417">
    <property type="entry name" value="P-loop_NTPase"/>
</dbReference>
<dbReference type="InterPro" id="IPR051943">
    <property type="entry name" value="TRAFAC_Dynamin-like_GTPase"/>
</dbReference>
<dbReference type="PANTHER" id="PTHR43681:SF1">
    <property type="entry name" value="SARCALUMENIN"/>
    <property type="match status" value="1"/>
</dbReference>
<dbReference type="PANTHER" id="PTHR43681">
    <property type="entry name" value="TRANSMEMBRANE GTPASE FZO"/>
    <property type="match status" value="1"/>
</dbReference>
<dbReference type="Pfam" id="PF00350">
    <property type="entry name" value="Dynamin_N"/>
    <property type="match status" value="1"/>
</dbReference>
<dbReference type="Pfam" id="PF16880">
    <property type="entry name" value="EHD_N"/>
    <property type="match status" value="1"/>
</dbReference>
<dbReference type="SUPFAM" id="SSF52540">
    <property type="entry name" value="P-loop containing nucleoside triphosphate hydrolases"/>
    <property type="match status" value="1"/>
</dbReference>
<dbReference type="PROSITE" id="PS51718">
    <property type="entry name" value="G_DYNAMIN_2"/>
    <property type="match status" value="1"/>
</dbReference>
<keyword id="KW-0025">Alternative splicing</keyword>
<keyword id="KW-0325">Glycoprotein</keyword>
<keyword id="KW-0472">Membrane</keyword>
<keyword id="KW-1185">Reference proteome</keyword>
<keyword id="KW-0703">Sarcoplasmic reticulum</keyword>
<keyword id="KW-0732">Signal</keyword>
<gene>
    <name type="primary">SRL</name>
</gene>
<protein>
    <recommendedName>
        <fullName evidence="1">Sarcalumenin</fullName>
    </recommendedName>
</protein>
<organism>
    <name type="scientific">Gallus gallus</name>
    <name type="common">Chicken</name>
    <dbReference type="NCBI Taxonomy" id="9031"/>
    <lineage>
        <taxon>Eukaryota</taxon>
        <taxon>Metazoa</taxon>
        <taxon>Chordata</taxon>
        <taxon>Craniata</taxon>
        <taxon>Vertebrata</taxon>
        <taxon>Euteleostomi</taxon>
        <taxon>Archelosauria</taxon>
        <taxon>Archosauria</taxon>
        <taxon>Dinosauria</taxon>
        <taxon>Saurischia</taxon>
        <taxon>Theropoda</taxon>
        <taxon>Coelurosauria</taxon>
        <taxon>Aves</taxon>
        <taxon>Neognathae</taxon>
        <taxon>Galloanserae</taxon>
        <taxon>Galliformes</taxon>
        <taxon>Phasianidae</taxon>
        <taxon>Phasianinae</taxon>
        <taxon>Gallus</taxon>
    </lineage>
</organism>